<gene>
    <name evidence="1" type="primary">rplF</name>
    <name type="ordered locus">DMR_12350</name>
</gene>
<dbReference type="EMBL" id="AP010904">
    <property type="protein sequence ID" value="BAH74726.1"/>
    <property type="molecule type" value="Genomic_DNA"/>
</dbReference>
<dbReference type="RefSeq" id="WP_015859941.1">
    <property type="nucleotide sequence ID" value="NC_012796.1"/>
</dbReference>
<dbReference type="SMR" id="C4XLY8"/>
<dbReference type="STRING" id="573370.DMR_12350"/>
<dbReference type="KEGG" id="dma:DMR_12350"/>
<dbReference type="eggNOG" id="COG0097">
    <property type="taxonomic scope" value="Bacteria"/>
</dbReference>
<dbReference type="HOGENOM" id="CLU_065464_1_2_7"/>
<dbReference type="OrthoDB" id="9805007at2"/>
<dbReference type="Proteomes" id="UP000009071">
    <property type="component" value="Chromosome"/>
</dbReference>
<dbReference type="GO" id="GO:0022625">
    <property type="term" value="C:cytosolic large ribosomal subunit"/>
    <property type="evidence" value="ECO:0007669"/>
    <property type="project" value="TreeGrafter"/>
</dbReference>
<dbReference type="GO" id="GO:0019843">
    <property type="term" value="F:rRNA binding"/>
    <property type="evidence" value="ECO:0007669"/>
    <property type="project" value="UniProtKB-UniRule"/>
</dbReference>
<dbReference type="GO" id="GO:0003735">
    <property type="term" value="F:structural constituent of ribosome"/>
    <property type="evidence" value="ECO:0007669"/>
    <property type="project" value="InterPro"/>
</dbReference>
<dbReference type="GO" id="GO:0002181">
    <property type="term" value="P:cytoplasmic translation"/>
    <property type="evidence" value="ECO:0007669"/>
    <property type="project" value="TreeGrafter"/>
</dbReference>
<dbReference type="FunFam" id="3.90.930.12:FF:000001">
    <property type="entry name" value="50S ribosomal protein L6"/>
    <property type="match status" value="1"/>
</dbReference>
<dbReference type="FunFam" id="3.90.930.12:FF:000002">
    <property type="entry name" value="50S ribosomal protein L6"/>
    <property type="match status" value="1"/>
</dbReference>
<dbReference type="Gene3D" id="3.90.930.12">
    <property type="entry name" value="Ribosomal protein L6, alpha-beta domain"/>
    <property type="match status" value="2"/>
</dbReference>
<dbReference type="HAMAP" id="MF_01365_B">
    <property type="entry name" value="Ribosomal_uL6_B"/>
    <property type="match status" value="1"/>
</dbReference>
<dbReference type="InterPro" id="IPR000702">
    <property type="entry name" value="Ribosomal_uL6-like"/>
</dbReference>
<dbReference type="InterPro" id="IPR036789">
    <property type="entry name" value="Ribosomal_uL6-like_a/b-dom_sf"/>
</dbReference>
<dbReference type="InterPro" id="IPR020040">
    <property type="entry name" value="Ribosomal_uL6_a/b-dom"/>
</dbReference>
<dbReference type="InterPro" id="IPR019906">
    <property type="entry name" value="Ribosomal_uL6_bac-type"/>
</dbReference>
<dbReference type="NCBIfam" id="TIGR03654">
    <property type="entry name" value="L6_bact"/>
    <property type="match status" value="1"/>
</dbReference>
<dbReference type="PANTHER" id="PTHR11655">
    <property type="entry name" value="60S/50S RIBOSOMAL PROTEIN L6/L9"/>
    <property type="match status" value="1"/>
</dbReference>
<dbReference type="PANTHER" id="PTHR11655:SF14">
    <property type="entry name" value="LARGE RIBOSOMAL SUBUNIT PROTEIN UL6M"/>
    <property type="match status" value="1"/>
</dbReference>
<dbReference type="Pfam" id="PF00347">
    <property type="entry name" value="Ribosomal_L6"/>
    <property type="match status" value="2"/>
</dbReference>
<dbReference type="PIRSF" id="PIRSF002162">
    <property type="entry name" value="Ribosomal_L6"/>
    <property type="match status" value="1"/>
</dbReference>
<dbReference type="PRINTS" id="PR00059">
    <property type="entry name" value="RIBOSOMALL6"/>
</dbReference>
<dbReference type="SUPFAM" id="SSF56053">
    <property type="entry name" value="Ribosomal protein L6"/>
    <property type="match status" value="2"/>
</dbReference>
<evidence type="ECO:0000255" key="1">
    <source>
        <dbReference type="HAMAP-Rule" id="MF_01365"/>
    </source>
</evidence>
<evidence type="ECO:0000305" key="2"/>
<feature type="chain" id="PRO_1000214924" description="Large ribosomal subunit protein uL6">
    <location>
        <begin position="1"/>
        <end position="179"/>
    </location>
</feature>
<accession>C4XLY8</accession>
<keyword id="KW-0687">Ribonucleoprotein</keyword>
<keyword id="KW-0689">Ribosomal protein</keyword>
<keyword id="KW-0694">RNA-binding</keyword>
<keyword id="KW-0699">rRNA-binding</keyword>
<organism>
    <name type="scientific">Solidesulfovibrio magneticus (strain ATCC 700980 / DSM 13731 / RS-1)</name>
    <name type="common">Desulfovibrio magneticus</name>
    <dbReference type="NCBI Taxonomy" id="573370"/>
    <lineage>
        <taxon>Bacteria</taxon>
        <taxon>Pseudomonadati</taxon>
        <taxon>Thermodesulfobacteriota</taxon>
        <taxon>Desulfovibrionia</taxon>
        <taxon>Desulfovibrionales</taxon>
        <taxon>Desulfovibrionaceae</taxon>
        <taxon>Solidesulfovibrio</taxon>
    </lineage>
</organism>
<comment type="function">
    <text evidence="1">This protein binds to the 23S rRNA, and is important in its secondary structure. It is located near the subunit interface in the base of the L7/L12 stalk, and near the tRNA binding site of the peptidyltransferase center.</text>
</comment>
<comment type="subunit">
    <text evidence="1">Part of the 50S ribosomal subunit.</text>
</comment>
<comment type="similarity">
    <text evidence="1">Belongs to the universal ribosomal protein uL6 family.</text>
</comment>
<sequence length="179" mass="19062">MSRIGKREIELPAGVSVELASDAVVVKGPKGQLSTPTHPKIAYAVADGKVQVSRTDDTRVARAQHGLRRTLLANLVEGVSKGFTKTLEVIGVGYKVATAGNTVSLAVGFSHPVDFKLPEGIEAKVEGNKLTLSGIDKVLLGETAARIRRVRPPEPFKGKGIKYENEVIRRKAGKSGGKK</sequence>
<name>RL6_SOLM1</name>
<proteinExistence type="inferred from homology"/>
<protein>
    <recommendedName>
        <fullName evidence="1">Large ribosomal subunit protein uL6</fullName>
    </recommendedName>
    <alternativeName>
        <fullName evidence="2">50S ribosomal protein L6</fullName>
    </alternativeName>
</protein>
<reference key="1">
    <citation type="journal article" date="2009" name="Genome Res.">
        <title>Whole genome sequence of Desulfovibrio magneticus strain RS-1 revealed common gene clusters in magnetotactic bacteria.</title>
        <authorList>
            <person name="Nakazawa H."/>
            <person name="Arakaki A."/>
            <person name="Narita-Yamada S."/>
            <person name="Yashiro I."/>
            <person name="Jinno K."/>
            <person name="Aoki N."/>
            <person name="Tsuruyama A."/>
            <person name="Okamura Y."/>
            <person name="Tanikawa S."/>
            <person name="Fujita N."/>
            <person name="Takeyama H."/>
            <person name="Matsunaga T."/>
        </authorList>
    </citation>
    <scope>NUCLEOTIDE SEQUENCE [LARGE SCALE GENOMIC DNA]</scope>
    <source>
        <strain>ATCC 700980 / DSM 13731 / RS-1</strain>
    </source>
</reference>